<comment type="function">
    <text evidence="1">Binds 23S rRNA and is also seen to make contacts with the A and possibly P site tRNAs.</text>
</comment>
<comment type="subunit">
    <text evidence="1">Part of the 50S ribosomal subunit.</text>
</comment>
<comment type="similarity">
    <text evidence="1">Belongs to the universal ribosomal protein uL16 family.</text>
</comment>
<proteinExistence type="inferred from homology"/>
<accession>P44354</accession>
<feature type="chain" id="PRO_0000062112" description="Large ribosomal subunit protein uL16">
    <location>
        <begin position="1"/>
        <end position="136"/>
    </location>
</feature>
<name>RL16_HAEIN</name>
<dbReference type="EMBL" id="L42023">
    <property type="protein sequence ID" value="AAC22443.1"/>
    <property type="molecule type" value="Genomic_DNA"/>
</dbReference>
<dbReference type="PIR" id="C64093">
    <property type="entry name" value="C64093"/>
</dbReference>
<dbReference type="RefSeq" id="NP_438943.1">
    <property type="nucleotide sequence ID" value="NC_000907.1"/>
</dbReference>
<dbReference type="SMR" id="P44354"/>
<dbReference type="STRING" id="71421.HI_0784"/>
<dbReference type="EnsemblBacteria" id="AAC22443">
    <property type="protein sequence ID" value="AAC22443"/>
    <property type="gene ID" value="HI_0784"/>
</dbReference>
<dbReference type="KEGG" id="hin:HI_0784"/>
<dbReference type="PATRIC" id="fig|71421.8.peg.823"/>
<dbReference type="eggNOG" id="COG0197">
    <property type="taxonomic scope" value="Bacteria"/>
</dbReference>
<dbReference type="HOGENOM" id="CLU_078858_2_1_6"/>
<dbReference type="OrthoDB" id="9802589at2"/>
<dbReference type="PhylomeDB" id="P44354"/>
<dbReference type="BioCyc" id="HINF71421:G1GJ1-824-MONOMER"/>
<dbReference type="Proteomes" id="UP000000579">
    <property type="component" value="Chromosome"/>
</dbReference>
<dbReference type="GO" id="GO:0022625">
    <property type="term" value="C:cytosolic large ribosomal subunit"/>
    <property type="evidence" value="ECO:0000318"/>
    <property type="project" value="GO_Central"/>
</dbReference>
<dbReference type="GO" id="GO:0019843">
    <property type="term" value="F:rRNA binding"/>
    <property type="evidence" value="ECO:0000318"/>
    <property type="project" value="GO_Central"/>
</dbReference>
<dbReference type="GO" id="GO:0003735">
    <property type="term" value="F:structural constituent of ribosome"/>
    <property type="evidence" value="ECO:0000318"/>
    <property type="project" value="GO_Central"/>
</dbReference>
<dbReference type="GO" id="GO:0000049">
    <property type="term" value="F:tRNA binding"/>
    <property type="evidence" value="ECO:0007669"/>
    <property type="project" value="UniProtKB-KW"/>
</dbReference>
<dbReference type="GO" id="GO:0006412">
    <property type="term" value="P:translation"/>
    <property type="evidence" value="ECO:0007669"/>
    <property type="project" value="UniProtKB-UniRule"/>
</dbReference>
<dbReference type="CDD" id="cd01433">
    <property type="entry name" value="Ribosomal_L16_L10e"/>
    <property type="match status" value="1"/>
</dbReference>
<dbReference type="FunFam" id="3.90.1170.10:FF:000001">
    <property type="entry name" value="50S ribosomal protein L16"/>
    <property type="match status" value="1"/>
</dbReference>
<dbReference type="Gene3D" id="3.90.1170.10">
    <property type="entry name" value="Ribosomal protein L10e/L16"/>
    <property type="match status" value="1"/>
</dbReference>
<dbReference type="HAMAP" id="MF_01342">
    <property type="entry name" value="Ribosomal_uL16"/>
    <property type="match status" value="1"/>
</dbReference>
<dbReference type="InterPro" id="IPR047873">
    <property type="entry name" value="Ribosomal_uL16"/>
</dbReference>
<dbReference type="InterPro" id="IPR000114">
    <property type="entry name" value="Ribosomal_uL16_bact-type"/>
</dbReference>
<dbReference type="InterPro" id="IPR020798">
    <property type="entry name" value="Ribosomal_uL16_CS"/>
</dbReference>
<dbReference type="InterPro" id="IPR016180">
    <property type="entry name" value="Ribosomal_uL16_dom"/>
</dbReference>
<dbReference type="InterPro" id="IPR036920">
    <property type="entry name" value="Ribosomal_uL16_sf"/>
</dbReference>
<dbReference type="NCBIfam" id="TIGR01164">
    <property type="entry name" value="rplP_bact"/>
    <property type="match status" value="1"/>
</dbReference>
<dbReference type="PANTHER" id="PTHR12220">
    <property type="entry name" value="50S/60S RIBOSOMAL PROTEIN L16"/>
    <property type="match status" value="1"/>
</dbReference>
<dbReference type="PANTHER" id="PTHR12220:SF13">
    <property type="entry name" value="LARGE RIBOSOMAL SUBUNIT PROTEIN UL16M"/>
    <property type="match status" value="1"/>
</dbReference>
<dbReference type="Pfam" id="PF00252">
    <property type="entry name" value="Ribosomal_L16"/>
    <property type="match status" value="1"/>
</dbReference>
<dbReference type="PRINTS" id="PR00060">
    <property type="entry name" value="RIBOSOMALL16"/>
</dbReference>
<dbReference type="SUPFAM" id="SSF54686">
    <property type="entry name" value="Ribosomal protein L16p/L10e"/>
    <property type="match status" value="1"/>
</dbReference>
<dbReference type="PROSITE" id="PS00586">
    <property type="entry name" value="RIBOSOMAL_L16_1"/>
    <property type="match status" value="1"/>
</dbReference>
<dbReference type="PROSITE" id="PS00701">
    <property type="entry name" value="RIBOSOMAL_L16_2"/>
    <property type="match status" value="1"/>
</dbReference>
<keyword id="KW-1185">Reference proteome</keyword>
<keyword id="KW-0687">Ribonucleoprotein</keyword>
<keyword id="KW-0689">Ribosomal protein</keyword>
<keyword id="KW-0694">RNA-binding</keyword>
<keyword id="KW-0699">rRNA-binding</keyword>
<keyword id="KW-0820">tRNA-binding</keyword>
<protein>
    <recommendedName>
        <fullName evidence="1">Large ribosomal subunit protein uL16</fullName>
    </recommendedName>
    <alternativeName>
        <fullName evidence="2">50S ribosomal protein L16</fullName>
    </alternativeName>
</protein>
<organism>
    <name type="scientific">Haemophilus influenzae (strain ATCC 51907 / DSM 11121 / KW20 / Rd)</name>
    <dbReference type="NCBI Taxonomy" id="71421"/>
    <lineage>
        <taxon>Bacteria</taxon>
        <taxon>Pseudomonadati</taxon>
        <taxon>Pseudomonadota</taxon>
        <taxon>Gammaproteobacteria</taxon>
        <taxon>Pasteurellales</taxon>
        <taxon>Pasteurellaceae</taxon>
        <taxon>Haemophilus</taxon>
    </lineage>
</organism>
<gene>
    <name evidence="1" type="primary">rplP</name>
    <name evidence="1" type="synonym">rpl16</name>
    <name type="ordered locus">HI_0784</name>
</gene>
<reference key="1">
    <citation type="journal article" date="1995" name="Science">
        <title>Whole-genome random sequencing and assembly of Haemophilus influenzae Rd.</title>
        <authorList>
            <person name="Fleischmann R.D."/>
            <person name="Adams M.D."/>
            <person name="White O."/>
            <person name="Clayton R.A."/>
            <person name="Kirkness E.F."/>
            <person name="Kerlavage A.R."/>
            <person name="Bult C.J."/>
            <person name="Tomb J.-F."/>
            <person name="Dougherty B.A."/>
            <person name="Merrick J.M."/>
            <person name="McKenney K."/>
            <person name="Sutton G.G."/>
            <person name="FitzHugh W."/>
            <person name="Fields C.A."/>
            <person name="Gocayne J.D."/>
            <person name="Scott J.D."/>
            <person name="Shirley R."/>
            <person name="Liu L.-I."/>
            <person name="Glodek A."/>
            <person name="Kelley J.M."/>
            <person name="Weidman J.F."/>
            <person name="Phillips C.A."/>
            <person name="Spriggs T."/>
            <person name="Hedblom E."/>
            <person name="Cotton M.D."/>
            <person name="Utterback T.R."/>
            <person name="Hanna M.C."/>
            <person name="Nguyen D.T."/>
            <person name="Saudek D.M."/>
            <person name="Brandon R.C."/>
            <person name="Fine L.D."/>
            <person name="Fritchman J.L."/>
            <person name="Fuhrmann J.L."/>
            <person name="Geoghagen N.S.M."/>
            <person name="Gnehm C.L."/>
            <person name="McDonald L.A."/>
            <person name="Small K.V."/>
            <person name="Fraser C.M."/>
            <person name="Smith H.O."/>
            <person name="Venter J.C."/>
        </authorList>
    </citation>
    <scope>NUCLEOTIDE SEQUENCE [LARGE SCALE GENOMIC DNA]</scope>
    <source>
        <strain>ATCC 51907 / DSM 11121 / KW20 / Rd</strain>
    </source>
</reference>
<evidence type="ECO:0000255" key="1">
    <source>
        <dbReference type="HAMAP-Rule" id="MF_01342"/>
    </source>
</evidence>
<evidence type="ECO:0000305" key="2"/>
<sequence length="136" mass="15232">MLQPKRTKFRKVHKGRNRGIASGTEVSFGTYGLKAVGRCRLTARQIEAARRAMSRAVKRQGKIWIRVFPDKPITEKPLEVRMGKGKGNVEYWVALIQPGKVLYEMDGVSEEVARNAFALAAAKLPVKTTFVTKTVM</sequence>